<accession>Q98QH5</accession>
<gene>
    <name evidence="1" type="primary">ecfA1</name>
    <name type="synonym">cbiO1</name>
    <name type="ordered locus">MYPU_3860</name>
</gene>
<comment type="function">
    <text evidence="1">ATP-binding (A) component of a common energy-coupling factor (ECF) ABC-transporter complex. Unlike classic ABC transporters this ECF transporter provides the energy necessary to transport a number of different substrates.</text>
</comment>
<comment type="subunit">
    <text evidence="1">Forms a stable energy-coupling factor (ECF) transporter complex composed of 2 membrane-embedded substrate-binding proteins (S component), 2 ATP-binding proteins (A component) and 2 transmembrane proteins (T component).</text>
</comment>
<comment type="subcellular location">
    <subcellularLocation>
        <location evidence="1">Cell membrane</location>
        <topology evidence="1">Peripheral membrane protein</topology>
    </subcellularLocation>
</comment>
<comment type="similarity">
    <text evidence="1">Belongs to the ABC transporter superfamily. Energy-coupling factor EcfA family.</text>
</comment>
<feature type="chain" id="PRO_0000092047" description="Energy-coupling factor transporter ATP-binding protein EcfA1">
    <location>
        <begin position="1"/>
        <end position="265"/>
    </location>
</feature>
<feature type="domain" description="ABC transporter" evidence="1">
    <location>
        <begin position="2"/>
        <end position="236"/>
    </location>
</feature>
<feature type="binding site" evidence="1">
    <location>
        <begin position="36"/>
        <end position="43"/>
    </location>
    <ligand>
        <name>ATP</name>
        <dbReference type="ChEBI" id="CHEBI:30616"/>
    </ligand>
</feature>
<organism>
    <name type="scientific">Mycoplasmopsis pulmonis (strain UAB CTIP)</name>
    <name type="common">Mycoplasma pulmonis</name>
    <dbReference type="NCBI Taxonomy" id="272635"/>
    <lineage>
        <taxon>Bacteria</taxon>
        <taxon>Bacillati</taxon>
        <taxon>Mycoplasmatota</taxon>
        <taxon>Mycoplasmoidales</taxon>
        <taxon>Metamycoplasmataceae</taxon>
        <taxon>Mycoplasmopsis</taxon>
    </lineage>
</organism>
<proteinExistence type="inferred from homology"/>
<dbReference type="EC" id="7.-.-.-" evidence="1"/>
<dbReference type="EMBL" id="AL445564">
    <property type="protein sequence ID" value="CAC13559.1"/>
    <property type="molecule type" value="Genomic_DNA"/>
</dbReference>
<dbReference type="PIR" id="B90560">
    <property type="entry name" value="B90560"/>
</dbReference>
<dbReference type="RefSeq" id="WP_010925190.1">
    <property type="nucleotide sequence ID" value="NC_002771.1"/>
</dbReference>
<dbReference type="SMR" id="Q98QH5"/>
<dbReference type="STRING" id="272635.gene:17576986"/>
<dbReference type="KEGG" id="mpu:MYPU_3860"/>
<dbReference type="eggNOG" id="COG1122">
    <property type="taxonomic scope" value="Bacteria"/>
</dbReference>
<dbReference type="HOGENOM" id="CLU_000604_1_22_14"/>
<dbReference type="BioCyc" id="MPUL272635:G1GT6-393-MONOMER"/>
<dbReference type="Proteomes" id="UP000000528">
    <property type="component" value="Chromosome"/>
</dbReference>
<dbReference type="GO" id="GO:0043190">
    <property type="term" value="C:ATP-binding cassette (ABC) transporter complex"/>
    <property type="evidence" value="ECO:0007669"/>
    <property type="project" value="TreeGrafter"/>
</dbReference>
<dbReference type="GO" id="GO:0005524">
    <property type="term" value="F:ATP binding"/>
    <property type="evidence" value="ECO:0007669"/>
    <property type="project" value="UniProtKB-KW"/>
</dbReference>
<dbReference type="GO" id="GO:0016887">
    <property type="term" value="F:ATP hydrolysis activity"/>
    <property type="evidence" value="ECO:0007669"/>
    <property type="project" value="InterPro"/>
</dbReference>
<dbReference type="GO" id="GO:0042626">
    <property type="term" value="F:ATPase-coupled transmembrane transporter activity"/>
    <property type="evidence" value="ECO:0007669"/>
    <property type="project" value="TreeGrafter"/>
</dbReference>
<dbReference type="CDD" id="cd03225">
    <property type="entry name" value="ABC_cobalt_CbiO_domain1"/>
    <property type="match status" value="1"/>
</dbReference>
<dbReference type="FunFam" id="3.40.50.300:FF:000224">
    <property type="entry name" value="Energy-coupling factor transporter ATP-binding protein EcfA"/>
    <property type="match status" value="1"/>
</dbReference>
<dbReference type="Gene3D" id="3.40.50.300">
    <property type="entry name" value="P-loop containing nucleotide triphosphate hydrolases"/>
    <property type="match status" value="1"/>
</dbReference>
<dbReference type="InterPro" id="IPR003593">
    <property type="entry name" value="AAA+_ATPase"/>
</dbReference>
<dbReference type="InterPro" id="IPR003439">
    <property type="entry name" value="ABC_transporter-like_ATP-bd"/>
</dbReference>
<dbReference type="InterPro" id="IPR017871">
    <property type="entry name" value="ABC_transporter-like_CS"/>
</dbReference>
<dbReference type="InterPro" id="IPR015856">
    <property type="entry name" value="ABC_transpr_CbiO/EcfA_su"/>
</dbReference>
<dbReference type="InterPro" id="IPR050095">
    <property type="entry name" value="ECF_ABC_transporter_ATP-bd"/>
</dbReference>
<dbReference type="InterPro" id="IPR030947">
    <property type="entry name" value="EcfA_1"/>
</dbReference>
<dbReference type="InterPro" id="IPR027417">
    <property type="entry name" value="P-loop_NTPase"/>
</dbReference>
<dbReference type="NCBIfam" id="TIGR04520">
    <property type="entry name" value="ECF_ATPase_1"/>
    <property type="match status" value="1"/>
</dbReference>
<dbReference type="NCBIfam" id="NF010167">
    <property type="entry name" value="PRK13648.1"/>
    <property type="match status" value="1"/>
</dbReference>
<dbReference type="PANTHER" id="PTHR43553:SF24">
    <property type="entry name" value="ENERGY-COUPLING FACTOR TRANSPORTER ATP-BINDING PROTEIN ECFA1"/>
    <property type="match status" value="1"/>
</dbReference>
<dbReference type="PANTHER" id="PTHR43553">
    <property type="entry name" value="HEAVY METAL TRANSPORTER"/>
    <property type="match status" value="1"/>
</dbReference>
<dbReference type="Pfam" id="PF00005">
    <property type="entry name" value="ABC_tran"/>
    <property type="match status" value="1"/>
</dbReference>
<dbReference type="SMART" id="SM00382">
    <property type="entry name" value="AAA"/>
    <property type="match status" value="1"/>
</dbReference>
<dbReference type="SUPFAM" id="SSF52540">
    <property type="entry name" value="P-loop containing nucleoside triphosphate hydrolases"/>
    <property type="match status" value="1"/>
</dbReference>
<dbReference type="PROSITE" id="PS00211">
    <property type="entry name" value="ABC_TRANSPORTER_1"/>
    <property type="match status" value="1"/>
</dbReference>
<dbReference type="PROSITE" id="PS50893">
    <property type="entry name" value="ABC_TRANSPORTER_2"/>
    <property type="match status" value="1"/>
</dbReference>
<dbReference type="PROSITE" id="PS51246">
    <property type="entry name" value="CBIO"/>
    <property type="match status" value="1"/>
</dbReference>
<reference key="1">
    <citation type="journal article" date="2001" name="Nucleic Acids Res.">
        <title>The complete genome sequence of the murine respiratory pathogen Mycoplasma pulmonis.</title>
        <authorList>
            <person name="Chambaud I."/>
            <person name="Heilig R."/>
            <person name="Ferris S."/>
            <person name="Barbe V."/>
            <person name="Samson D."/>
            <person name="Galisson F."/>
            <person name="Moszer I."/>
            <person name="Dybvig K."/>
            <person name="Wroblewski H."/>
            <person name="Viari A."/>
            <person name="Rocha E.P.C."/>
            <person name="Blanchard A."/>
        </authorList>
    </citation>
    <scope>NUCLEOTIDE SEQUENCE [LARGE SCALE GENOMIC DNA]</scope>
    <source>
        <strain>UAB CTIP</strain>
    </source>
</reference>
<sequence length="265" mass="29517">MIKIKNLVFRYRNSSNNALDDLTLWIPKGKYVAILGHNGSGKSTLSKILVGLFKPTSGEVEIDGVVLNQESKNLIQSKVGIILQNPDNQFIGATVEDDIAFGLENKMLKSEKIKEIIDFYSEKVGMKEFLKREPQNLSGGQKQRVAIASVLALDPEVIIFDEVTSMLDPLGKHSILELIKDIQEKNSKTLISITHDMDEAIQADYCLVFSAGKLVASGKPADILNNKEIVELAKIDSPFIYKISQKLEGIEPTYDEEHLLEQICK</sequence>
<evidence type="ECO:0000255" key="1">
    <source>
        <dbReference type="HAMAP-Rule" id="MF_01710"/>
    </source>
</evidence>
<protein>
    <recommendedName>
        <fullName evidence="1">Energy-coupling factor transporter ATP-binding protein EcfA1</fullName>
        <shortName evidence="1">ECF transporter A component EcfA1</shortName>
        <ecNumber evidence="1">7.-.-.-</ecNumber>
    </recommendedName>
</protein>
<keyword id="KW-0067">ATP-binding</keyword>
<keyword id="KW-1003">Cell membrane</keyword>
<keyword id="KW-0472">Membrane</keyword>
<keyword id="KW-0547">Nucleotide-binding</keyword>
<keyword id="KW-1185">Reference proteome</keyword>
<keyword id="KW-1278">Translocase</keyword>
<keyword id="KW-0813">Transport</keyword>
<name>ECFA1_MYCPU</name>